<protein>
    <recommendedName>
        <fullName>Putative sodium-coupled neutral amino acid transporter 10</fullName>
    </recommendedName>
    <alternativeName>
        <fullName>Solute carrier family 38 member 10</fullName>
    </alternativeName>
</protein>
<evidence type="ECO:0000250" key="1"/>
<evidence type="ECO:0000255" key="2"/>
<evidence type="ECO:0000256" key="3">
    <source>
        <dbReference type="SAM" id="MobiDB-lite"/>
    </source>
</evidence>
<evidence type="ECO:0000305" key="4"/>
<name>S38AA_XENLA</name>
<keyword id="KW-0029">Amino-acid transport</keyword>
<keyword id="KW-0406">Ion transport</keyword>
<keyword id="KW-0472">Membrane</keyword>
<keyword id="KW-1185">Reference proteome</keyword>
<keyword id="KW-0915">Sodium</keyword>
<keyword id="KW-0739">Sodium transport</keyword>
<keyword id="KW-0812">Transmembrane</keyword>
<keyword id="KW-1133">Transmembrane helix</keyword>
<keyword id="KW-0813">Transport</keyword>
<feature type="chain" id="PRO_0000318978" description="Putative sodium-coupled neutral amino acid transporter 10">
    <location>
        <begin position="1"/>
        <end position="1045"/>
    </location>
</feature>
<feature type="transmembrane region" description="Helical" evidence="2">
    <location>
        <begin position="8"/>
        <end position="28"/>
    </location>
</feature>
<feature type="transmembrane region" description="Helical" evidence="2">
    <location>
        <begin position="33"/>
        <end position="53"/>
    </location>
</feature>
<feature type="transmembrane region" description="Helical" evidence="2">
    <location>
        <begin position="85"/>
        <end position="105"/>
    </location>
</feature>
<feature type="transmembrane region" description="Helical" evidence="2">
    <location>
        <begin position="117"/>
        <end position="137"/>
    </location>
</feature>
<feature type="transmembrane region" description="Helical" evidence="2">
    <location>
        <begin position="150"/>
        <end position="170"/>
    </location>
</feature>
<feature type="transmembrane region" description="Helical" evidence="2">
    <location>
        <begin position="226"/>
        <end position="246"/>
    </location>
</feature>
<feature type="transmembrane region" description="Helical" evidence="2">
    <location>
        <begin position="269"/>
        <end position="289"/>
    </location>
</feature>
<feature type="transmembrane region" description="Helical" evidence="2">
    <location>
        <begin position="320"/>
        <end position="340"/>
    </location>
</feature>
<feature type="transmembrane region" description="Helical" evidence="2">
    <location>
        <begin position="342"/>
        <end position="362"/>
    </location>
</feature>
<feature type="transmembrane region" description="Helical" evidence="2">
    <location>
        <begin position="375"/>
        <end position="395"/>
    </location>
</feature>
<feature type="region of interest" description="Disordered" evidence="3">
    <location>
        <begin position="412"/>
        <end position="584"/>
    </location>
</feature>
<feature type="region of interest" description="Disordered" evidence="3">
    <location>
        <begin position="606"/>
        <end position="658"/>
    </location>
</feature>
<feature type="compositionally biased region" description="Basic and acidic residues" evidence="3">
    <location>
        <begin position="412"/>
        <end position="453"/>
    </location>
</feature>
<feature type="compositionally biased region" description="Basic and acidic residues" evidence="3">
    <location>
        <begin position="460"/>
        <end position="479"/>
    </location>
</feature>
<feature type="compositionally biased region" description="Basic and acidic residues" evidence="3">
    <location>
        <begin position="503"/>
        <end position="546"/>
    </location>
</feature>
<feature type="compositionally biased region" description="Polar residues" evidence="3">
    <location>
        <begin position="564"/>
        <end position="573"/>
    </location>
</feature>
<feature type="compositionally biased region" description="Basic and acidic residues" evidence="3">
    <location>
        <begin position="627"/>
        <end position="658"/>
    </location>
</feature>
<comment type="function">
    <text evidence="1">Putative sodium-dependent amino acid/proton antiporter.</text>
</comment>
<comment type="subcellular location">
    <subcellularLocation>
        <location evidence="4">Membrane</location>
        <topology evidence="4">Multi-pass membrane protein</topology>
    </subcellularLocation>
</comment>
<comment type="similarity">
    <text evidence="4">Belongs to the amino acid/polyamine transporter 2 family.</text>
</comment>
<gene>
    <name type="primary">slc38a10</name>
</gene>
<proteinExistence type="evidence at transcript level"/>
<sequence length="1045" mass="116690">MAASNWGLIMNIVNSIVGVSVLTMPFCFQQCGILLGTLLLMLCTWMAHHSCMFLVKSASVSKRRTYAGLAFHAYGKVGKMMVETSMIGLMLGTCIAFYVVIGDLGSSFFARLFGLEVSEGFRVFLLFSVSLCIVLPLSLQRNMMAFIQSFSAMALMFYTVFMFVIVLSSFKHGLFSGQWLKHVSYIRWEGVFRCIPIYGMSFACQSQVLPTYDSLDDPSVKIMSSIFALSLNVVTTFYITVGFFGYVSFPETIAGNVLVNFPSNLVTEMIRVGFMMSVAVGFPMMILPCRQALNTLLFEQQQKDGTFTAGGYMPPLRFKILTLVVVFGTMLGGILIPNVETILGLTGATMGSLICLICPALIYKKIHKKGLASQFILGVGLLILVISTYTTLTVTEEPTQIKSELLERIDLKEEKDPEQINSQKSDEKAKVEQPGDNRDKPKLPPKNPEEEQIKGPIEGPQKEKDTKKQEEVQLDRPDQGDIAVPVGEAHRHEPPIPQDEVAVDEKKDQGEREEKKESVVDINSTEKKDKQQINLEKEPEIKDQAEANKGINEPVPQKPPQEVNDPNKQQLVNPPTPRLKEQPPFKDLEGIIKDLAVPVEIKKNAEIAEEKDNNDFANPVKAIENPPIKDEKNEQIPGDPGKESHVEPKAEDNQAEAGKAELLDHAFLLQVIKEQQVQQKRLLDQQEKLLEVIKEQHMEIHQQKGDEDQQDKLEGNIADKNKEELKAEARVAQKPLEGDKLENVGEVNAKVDKPAVEEHVVVVEKEQNPALNQVVKGNVPDVKKNDHKIEAPKINVEEVKVPISAGKHKKQSVQENLIHQQDVDQGASDNYKQREKAVAANKDYVLGHIIQQETANPIDPITLPDLQDKLGKLALHQTEPKQKPVKIAGIGEKKLGAVQEEKILVQKGQEAQADKVIQDNYNPVPDHGLHENNNADAPATINVEAKKEHIEKPKDGAVLEHDEGKQNRDLKLQNDMDLRRKKRDLALVQQENNGAQIISFHPVPNLKVNDLRGALEARLNQMVDGGLQVVQSRKIKQLIDEEKNR</sequence>
<reference key="1">
    <citation type="submission" date="2003-10" db="EMBL/GenBank/DDBJ databases">
        <authorList>
            <consortium name="NIH - Xenopus Gene Collection (XGC) project"/>
        </authorList>
    </citation>
    <scope>NUCLEOTIDE SEQUENCE [LARGE SCALE MRNA]</scope>
    <source>
        <tissue>Ovary</tissue>
    </source>
</reference>
<dbReference type="EMBL" id="BC059341">
    <property type="protein sequence ID" value="AAH59341.1"/>
    <property type="molecule type" value="mRNA"/>
</dbReference>
<dbReference type="RefSeq" id="NP_001080033.1">
    <property type="nucleotide sequence ID" value="NM_001086564.1"/>
</dbReference>
<dbReference type="SMR" id="Q6PCF9"/>
<dbReference type="DNASU" id="379725"/>
<dbReference type="GeneID" id="379725"/>
<dbReference type="KEGG" id="xla:379725"/>
<dbReference type="AGR" id="Xenbase:XB-GENE-958200"/>
<dbReference type="CTD" id="379725"/>
<dbReference type="Xenbase" id="XB-GENE-958200">
    <property type="gene designation" value="slc38a10.S"/>
</dbReference>
<dbReference type="OrthoDB" id="513400at2759"/>
<dbReference type="Proteomes" id="UP000186698">
    <property type="component" value="Chromosome 9_10S"/>
</dbReference>
<dbReference type="Bgee" id="379725">
    <property type="expression patterns" value="Expressed in zone of skin and 19 other cell types or tissues"/>
</dbReference>
<dbReference type="GO" id="GO:0016020">
    <property type="term" value="C:membrane"/>
    <property type="evidence" value="ECO:0000318"/>
    <property type="project" value="GO_Central"/>
</dbReference>
<dbReference type="GO" id="GO:0015179">
    <property type="term" value="F:L-amino acid transmembrane transporter activity"/>
    <property type="evidence" value="ECO:0000318"/>
    <property type="project" value="GO_Central"/>
</dbReference>
<dbReference type="GO" id="GO:0003333">
    <property type="term" value="P:amino acid transmembrane transport"/>
    <property type="evidence" value="ECO:0000318"/>
    <property type="project" value="GO_Central"/>
</dbReference>
<dbReference type="GO" id="GO:0006814">
    <property type="term" value="P:sodium ion transport"/>
    <property type="evidence" value="ECO:0007669"/>
    <property type="project" value="UniProtKB-KW"/>
</dbReference>
<dbReference type="InterPro" id="IPR013057">
    <property type="entry name" value="AA_transpt_TM"/>
</dbReference>
<dbReference type="PANTHER" id="PTHR22950">
    <property type="entry name" value="AMINO ACID TRANSPORTER"/>
    <property type="match status" value="1"/>
</dbReference>
<dbReference type="PANTHER" id="PTHR22950:SF646">
    <property type="entry name" value="SODIUM-COUPLED NEUTRAL AMINO ACID TRANSPORTER 10-RELATED"/>
    <property type="match status" value="1"/>
</dbReference>
<dbReference type="Pfam" id="PF01490">
    <property type="entry name" value="Aa_trans"/>
    <property type="match status" value="1"/>
</dbReference>
<organism>
    <name type="scientific">Xenopus laevis</name>
    <name type="common">African clawed frog</name>
    <dbReference type="NCBI Taxonomy" id="8355"/>
    <lineage>
        <taxon>Eukaryota</taxon>
        <taxon>Metazoa</taxon>
        <taxon>Chordata</taxon>
        <taxon>Craniata</taxon>
        <taxon>Vertebrata</taxon>
        <taxon>Euteleostomi</taxon>
        <taxon>Amphibia</taxon>
        <taxon>Batrachia</taxon>
        <taxon>Anura</taxon>
        <taxon>Pipoidea</taxon>
        <taxon>Pipidae</taxon>
        <taxon>Xenopodinae</taxon>
        <taxon>Xenopus</taxon>
        <taxon>Xenopus</taxon>
    </lineage>
</organism>
<accession>Q6PCF9</accession>